<dbReference type="EC" id="2.2.1.6"/>
<dbReference type="EMBL" id="X01609">
    <property type="protein sequence ID" value="CAA25755.1"/>
    <property type="status" value="ALT_FRAME"/>
    <property type="molecule type" value="Genomic_DNA"/>
</dbReference>
<dbReference type="EMBL" id="U00096">
    <property type="protein sequence ID" value="AAC73188.2"/>
    <property type="molecule type" value="Genomic_DNA"/>
</dbReference>
<dbReference type="EMBL" id="AP009048">
    <property type="protein sequence ID" value="BAB96646.2"/>
    <property type="molecule type" value="Genomic_DNA"/>
</dbReference>
<dbReference type="EMBL" id="X55034">
    <property type="protein sequence ID" value="CAA38854.1"/>
    <property type="molecule type" value="Genomic_DNA"/>
</dbReference>
<dbReference type="EMBL" id="M10738">
    <property type="protein sequence ID" value="AAA24026.1"/>
    <property type="molecule type" value="Genomic_DNA"/>
</dbReference>
<dbReference type="PIR" id="E64729">
    <property type="entry name" value="YCEC3I"/>
</dbReference>
<dbReference type="RefSeq" id="WP_001295534.1">
    <property type="nucleotide sequence ID" value="NZ_STEB01000010.1"/>
</dbReference>
<dbReference type="RefSeq" id="YP_025294.2">
    <property type="nucleotide sequence ID" value="NC_000913.3"/>
</dbReference>
<dbReference type="SMR" id="P00893"/>
<dbReference type="BioGRID" id="4259380">
    <property type="interactions" value="40"/>
</dbReference>
<dbReference type="BioGRID" id="853076">
    <property type="interactions" value="5"/>
</dbReference>
<dbReference type="ComplexPortal" id="CPX-3575">
    <property type="entry name" value="Acetolactate synthase III complex"/>
</dbReference>
<dbReference type="DIP" id="DIP-6850N"/>
<dbReference type="FunCoup" id="P00893">
    <property type="interactions" value="731"/>
</dbReference>
<dbReference type="IntAct" id="P00893">
    <property type="interactions" value="7"/>
</dbReference>
<dbReference type="STRING" id="511145.b0077"/>
<dbReference type="jPOST" id="P00893"/>
<dbReference type="PaxDb" id="511145-b0077"/>
<dbReference type="EnsemblBacteria" id="AAC73188">
    <property type="protein sequence ID" value="AAC73188"/>
    <property type="gene ID" value="b0077"/>
</dbReference>
<dbReference type="GeneID" id="948793"/>
<dbReference type="KEGG" id="ecj:JW0076"/>
<dbReference type="KEGG" id="eco:b0077"/>
<dbReference type="PATRIC" id="fig|1411691.4.peg.2203"/>
<dbReference type="EchoBASE" id="EB0495"/>
<dbReference type="eggNOG" id="COG0028">
    <property type="taxonomic scope" value="Bacteria"/>
</dbReference>
<dbReference type="HOGENOM" id="CLU_013748_1_2_6"/>
<dbReference type="InParanoid" id="P00893"/>
<dbReference type="OMA" id="QETDMIG"/>
<dbReference type="OrthoDB" id="9785953at2"/>
<dbReference type="PhylomeDB" id="P00893"/>
<dbReference type="BioCyc" id="EcoCyc:ACETOLACTSYNIII-ICHAIN-MONOMER"/>
<dbReference type="BioCyc" id="MetaCyc:ACETOLACTSYNIII-ICHAIN-MONOMER"/>
<dbReference type="BRENDA" id="2.2.1.6">
    <property type="organism ID" value="2026"/>
</dbReference>
<dbReference type="UniPathway" id="UPA00047">
    <property type="reaction ID" value="UER00055"/>
</dbReference>
<dbReference type="UniPathway" id="UPA00049">
    <property type="reaction ID" value="UER00059"/>
</dbReference>
<dbReference type="PRO" id="PR:P00893"/>
<dbReference type="Proteomes" id="UP000000625">
    <property type="component" value="Chromosome"/>
</dbReference>
<dbReference type="GO" id="GO:0005948">
    <property type="term" value="C:acetolactate synthase complex"/>
    <property type="evidence" value="ECO:0000353"/>
    <property type="project" value="ComplexPortal"/>
</dbReference>
<dbReference type="GO" id="GO:0005829">
    <property type="term" value="C:cytosol"/>
    <property type="evidence" value="ECO:0000314"/>
    <property type="project" value="EcoCyc"/>
</dbReference>
<dbReference type="GO" id="GO:0003984">
    <property type="term" value="F:acetolactate synthase activity"/>
    <property type="evidence" value="ECO:0000314"/>
    <property type="project" value="EcoCyc"/>
</dbReference>
<dbReference type="GO" id="GO:0050660">
    <property type="term" value="F:flavin adenine dinucleotide binding"/>
    <property type="evidence" value="ECO:0000318"/>
    <property type="project" value="GO_Central"/>
</dbReference>
<dbReference type="GO" id="GO:0000287">
    <property type="term" value="F:magnesium ion binding"/>
    <property type="evidence" value="ECO:0000314"/>
    <property type="project" value="EcoCyc"/>
</dbReference>
<dbReference type="GO" id="GO:0030976">
    <property type="term" value="F:thiamine pyrophosphate binding"/>
    <property type="evidence" value="ECO:0000314"/>
    <property type="project" value="EcoCyc"/>
</dbReference>
<dbReference type="GO" id="GO:0009082">
    <property type="term" value="P:branched-chain amino acid biosynthetic process"/>
    <property type="evidence" value="ECO:0000314"/>
    <property type="project" value="ComplexPortal"/>
</dbReference>
<dbReference type="GO" id="GO:0009097">
    <property type="term" value="P:isoleucine biosynthetic process"/>
    <property type="evidence" value="ECO:0000314"/>
    <property type="project" value="EcoCyc"/>
</dbReference>
<dbReference type="GO" id="GO:0009099">
    <property type="term" value="P:L-valine biosynthetic process"/>
    <property type="evidence" value="ECO:0000314"/>
    <property type="project" value="EcoCyc"/>
</dbReference>
<dbReference type="CDD" id="cd02015">
    <property type="entry name" value="TPP_AHAS"/>
    <property type="match status" value="1"/>
</dbReference>
<dbReference type="CDD" id="cd07035">
    <property type="entry name" value="TPP_PYR_POX_like"/>
    <property type="match status" value="1"/>
</dbReference>
<dbReference type="FunFam" id="3.40.50.1220:FF:000008">
    <property type="entry name" value="Acetolactate synthase"/>
    <property type="match status" value="1"/>
</dbReference>
<dbReference type="FunFam" id="3.40.50.970:FF:000007">
    <property type="entry name" value="Acetolactate synthase"/>
    <property type="match status" value="1"/>
</dbReference>
<dbReference type="FunFam" id="3.40.50.970:FF:000016">
    <property type="entry name" value="Acetolactate synthase"/>
    <property type="match status" value="1"/>
</dbReference>
<dbReference type="Gene3D" id="3.40.50.970">
    <property type="match status" value="2"/>
</dbReference>
<dbReference type="Gene3D" id="3.40.50.1220">
    <property type="entry name" value="TPP-binding domain"/>
    <property type="match status" value="1"/>
</dbReference>
<dbReference type="InterPro" id="IPR012846">
    <property type="entry name" value="Acetolactate_synth_lsu"/>
</dbReference>
<dbReference type="InterPro" id="IPR039368">
    <property type="entry name" value="AHAS_TPP"/>
</dbReference>
<dbReference type="InterPro" id="IPR029035">
    <property type="entry name" value="DHS-like_NAD/FAD-binding_dom"/>
</dbReference>
<dbReference type="InterPro" id="IPR029061">
    <property type="entry name" value="THDP-binding"/>
</dbReference>
<dbReference type="InterPro" id="IPR012000">
    <property type="entry name" value="Thiamin_PyroP_enz_cen_dom"/>
</dbReference>
<dbReference type="InterPro" id="IPR012001">
    <property type="entry name" value="Thiamin_PyroP_enz_TPP-bd_dom"/>
</dbReference>
<dbReference type="InterPro" id="IPR000399">
    <property type="entry name" value="TPP-bd_CS"/>
</dbReference>
<dbReference type="InterPro" id="IPR045229">
    <property type="entry name" value="TPP_enz"/>
</dbReference>
<dbReference type="InterPro" id="IPR011766">
    <property type="entry name" value="TPP_enzyme_TPP-bd"/>
</dbReference>
<dbReference type="NCBIfam" id="TIGR00118">
    <property type="entry name" value="acolac_lg"/>
    <property type="match status" value="1"/>
</dbReference>
<dbReference type="NCBIfam" id="NF005058">
    <property type="entry name" value="PRK06466.1"/>
    <property type="match status" value="1"/>
</dbReference>
<dbReference type="NCBIfam" id="NF005936">
    <property type="entry name" value="PRK07979.1"/>
    <property type="match status" value="1"/>
</dbReference>
<dbReference type="NCBIfam" id="NF006525">
    <property type="entry name" value="PRK08979.1"/>
    <property type="match status" value="1"/>
</dbReference>
<dbReference type="PANTHER" id="PTHR18968:SF13">
    <property type="entry name" value="ACETOLACTATE SYNTHASE CATALYTIC SUBUNIT, MITOCHONDRIAL"/>
    <property type="match status" value="1"/>
</dbReference>
<dbReference type="PANTHER" id="PTHR18968">
    <property type="entry name" value="THIAMINE PYROPHOSPHATE ENZYMES"/>
    <property type="match status" value="1"/>
</dbReference>
<dbReference type="Pfam" id="PF02775">
    <property type="entry name" value="TPP_enzyme_C"/>
    <property type="match status" value="1"/>
</dbReference>
<dbReference type="Pfam" id="PF00205">
    <property type="entry name" value="TPP_enzyme_M"/>
    <property type="match status" value="1"/>
</dbReference>
<dbReference type="Pfam" id="PF02776">
    <property type="entry name" value="TPP_enzyme_N"/>
    <property type="match status" value="1"/>
</dbReference>
<dbReference type="SUPFAM" id="SSF52467">
    <property type="entry name" value="DHS-like NAD/FAD-binding domain"/>
    <property type="match status" value="1"/>
</dbReference>
<dbReference type="SUPFAM" id="SSF52518">
    <property type="entry name" value="Thiamin diphosphate-binding fold (THDP-binding)"/>
    <property type="match status" value="2"/>
</dbReference>
<dbReference type="PROSITE" id="PS00187">
    <property type="entry name" value="TPP_ENZYMES"/>
    <property type="match status" value="1"/>
</dbReference>
<protein>
    <recommendedName>
        <fullName>Acetolactate synthase isozyme 3 large subunit</fullName>
        <ecNumber>2.2.1.6</ecNumber>
    </recommendedName>
    <alternativeName>
        <fullName>AHAS-III</fullName>
    </alternativeName>
    <alternativeName>
        <fullName>ALS-III</fullName>
    </alternativeName>
    <alternativeName>
        <fullName>Acetohydroxy-acid synthase III large subunit</fullName>
    </alternativeName>
</protein>
<comment type="catalytic activity">
    <reaction>
        <text>2 pyruvate + H(+) = (2S)-2-acetolactate + CO2</text>
        <dbReference type="Rhea" id="RHEA:25249"/>
        <dbReference type="ChEBI" id="CHEBI:15361"/>
        <dbReference type="ChEBI" id="CHEBI:15378"/>
        <dbReference type="ChEBI" id="CHEBI:16526"/>
        <dbReference type="ChEBI" id="CHEBI:58476"/>
        <dbReference type="EC" id="2.2.1.6"/>
    </reaction>
</comment>
<comment type="cofactor">
    <cofactor evidence="1">
        <name>Mg(2+)</name>
        <dbReference type="ChEBI" id="CHEBI:18420"/>
    </cofactor>
    <text evidence="1">Binds 1 Mg(2+) ion per subunit.</text>
</comment>
<comment type="cofactor">
    <cofactor evidence="1">
        <name>thiamine diphosphate</name>
        <dbReference type="ChEBI" id="CHEBI:58937"/>
    </cofactor>
    <text evidence="1">Binds 1 thiamine pyrophosphate per subunit.</text>
</comment>
<comment type="activity regulation">
    <text>Sensitive to valine inhibition.</text>
</comment>
<comment type="pathway">
    <text>Amino-acid biosynthesis; L-isoleucine biosynthesis; L-isoleucine from 2-oxobutanoate: step 1/4.</text>
</comment>
<comment type="pathway">
    <text>Amino-acid biosynthesis; L-valine biosynthesis; L-valine from pyruvate: step 1/4.</text>
</comment>
<comment type="subunit">
    <text>Dimer of large and small chains.</text>
</comment>
<comment type="miscellaneous">
    <text>E.coli contains genes for 3 AHAS isozymes: ilvBN, ilvGM and ilvIH.</text>
</comment>
<comment type="miscellaneous">
    <text evidence="1">Contains 1 molecule of FAD per monomer. The role of this cofactor is not clear considering that the reaction does not involve redox chemistry (By similarity).</text>
</comment>
<comment type="similarity">
    <text evidence="2">Belongs to the TPP enzyme family.</text>
</comment>
<comment type="sequence caution" evidence="2">
    <conflict type="frameshift">
        <sequence resource="EMBL-CDS" id="CAA25755"/>
    </conflict>
</comment>
<evidence type="ECO:0000250" key="1"/>
<evidence type="ECO:0000305" key="2"/>
<feature type="chain" id="PRO_0000090789" description="Acetolactate synthase isozyme 3 large subunit">
    <location>
        <begin position="1"/>
        <end position="574"/>
    </location>
</feature>
<feature type="region of interest" description="Thiamine pyrophosphate binding">
    <location>
        <begin position="397"/>
        <end position="477"/>
    </location>
</feature>
<feature type="binding site" evidence="1">
    <location>
        <position position="51"/>
    </location>
    <ligand>
        <name>thiamine diphosphate</name>
        <dbReference type="ChEBI" id="CHEBI:58937"/>
    </ligand>
</feature>
<feature type="binding site" evidence="1">
    <location>
        <position position="153"/>
    </location>
    <ligand>
        <name>FAD</name>
        <dbReference type="ChEBI" id="CHEBI:57692"/>
    </ligand>
</feature>
<feature type="binding site" evidence="1">
    <location>
        <begin position="261"/>
        <end position="282"/>
    </location>
    <ligand>
        <name>FAD</name>
        <dbReference type="ChEBI" id="CHEBI:57692"/>
    </ligand>
</feature>
<feature type="binding site" evidence="1">
    <location>
        <begin position="304"/>
        <end position="323"/>
    </location>
    <ligand>
        <name>FAD</name>
        <dbReference type="ChEBI" id="CHEBI:57692"/>
    </ligand>
</feature>
<feature type="binding site" evidence="1">
    <location>
        <position position="448"/>
    </location>
    <ligand>
        <name>Mg(2+)</name>
        <dbReference type="ChEBI" id="CHEBI:18420"/>
    </ligand>
</feature>
<feature type="binding site" evidence="1">
    <location>
        <position position="475"/>
    </location>
    <ligand>
        <name>Mg(2+)</name>
        <dbReference type="ChEBI" id="CHEBI:18420"/>
    </ligand>
</feature>
<feature type="sequence conflict" description="In Ref. 1; CAA25755 and 5; CAA38854." evidence="2" ref="1 5">
    <original>TL</original>
    <variation>SV</variation>
    <location>
        <begin position="202"/>
        <end position="203"/>
    </location>
</feature>
<feature type="sequence conflict" description="In Ref. 1; CAA25755 and 5; CAA38854." evidence="2" ref="1 5">
    <original>A</original>
    <variation>V</variation>
    <location>
        <position position="206"/>
    </location>
</feature>
<feature type="sequence conflict" description="In Ref. 1; CAA25755 and 5; CAA38854." evidence="2" ref="1 5">
    <original>A</original>
    <variation>V</variation>
    <location>
        <position position="254"/>
    </location>
</feature>
<feature type="sequence conflict" description="In Ref. 1; CAA25755 and 5; CAA38854." evidence="2" ref="1 5">
    <original>T</original>
    <variation>S</variation>
    <location>
        <position position="422"/>
    </location>
</feature>
<feature type="sequence conflict" description="In Ref. 5; CAA38854." evidence="2" ref="5">
    <original>LP</original>
    <variation>FA</variation>
    <location>
        <begin position="437"/>
        <end position="438"/>
    </location>
</feature>
<feature type="sequence conflict" description="In Ref. 1; CAA25755 and 5; CAA38854." evidence="2" ref="1 5">
    <original>LAE</original>
    <variation>RG</variation>
    <location>
        <begin position="507"/>
        <end position="509"/>
    </location>
</feature>
<sequence>MEMLSGAEMVVRSLIDQGVKQVFGYPGGAVLDIYDALHTVGGIDHVLVRHEQAAVHMADGLARATGEVGVVLVTSGPGATNAITGIATAYMDSIPLVVLSGQVATSLIGYDAFQECDMVGISRPVVKHSFLVKQTEDIPQVLKKAFWLAASGRPGPVVVDLPKDILNPANKLPYVWPESVSMRSYNPTTTGHKGQIKRALQTLVAAKKPVVYVGGGAITAGCHQQLKETVEALNLPVVCSLMGLGAFPATHRQALGMLGMHGTYEANMTMHNADVIFAVGVRFDDRTTNNLAKYCPNATVLHIDIDPTSISKTVTADIPIVGDARQVLEQMLELLSQESAHQPLDEIRDWWQQIEQWRARQCLKYDTHSEKIKPQAVIETLWRLTKGDAYVTSDVGQHQMFAALYYPFDKPRRWINSGGLGTMGFGLPAALGVKMALPEETVVCVTGDGSIQMNIQELSTALQYELPVLVVNLNNRYLGMVKQWQDMIYSGRHSQSYMQSLPDFVRLAEAYGHVGIQISHPHELESKLSEALEQVRNNRLVFVDVTVDGSEHVYPMQIRGGGMDEMWLSKTERT</sequence>
<keyword id="KW-0028">Amino-acid biosynthesis</keyword>
<keyword id="KW-0100">Branched-chain amino acid biosynthesis</keyword>
<keyword id="KW-0903">Direct protein sequencing</keyword>
<keyword id="KW-0274">FAD</keyword>
<keyword id="KW-0285">Flavoprotein</keyword>
<keyword id="KW-0460">Magnesium</keyword>
<keyword id="KW-0479">Metal-binding</keyword>
<keyword id="KW-1185">Reference proteome</keyword>
<keyword id="KW-0786">Thiamine pyrophosphate</keyword>
<keyword id="KW-0808">Transferase</keyword>
<gene>
    <name type="primary">ilvI</name>
    <name type="ordered locus">b0077</name>
    <name type="ordered locus">JW0076</name>
</gene>
<name>ILVI_ECOLI</name>
<proteinExistence type="evidence at protein level"/>
<organism>
    <name type="scientific">Escherichia coli (strain K12)</name>
    <dbReference type="NCBI Taxonomy" id="83333"/>
    <lineage>
        <taxon>Bacteria</taxon>
        <taxon>Pseudomonadati</taxon>
        <taxon>Pseudomonadota</taxon>
        <taxon>Gammaproteobacteria</taxon>
        <taxon>Enterobacterales</taxon>
        <taxon>Enterobacteriaceae</taxon>
        <taxon>Escherichia</taxon>
    </lineage>
</organism>
<reference key="1">
    <citation type="journal article" date="1983" name="Nucleic Acids Res.">
        <title>Molecular structure of ilvIH and its evolutionary relationship to ilvG in Escherichia coli K12.</title>
        <authorList>
            <person name="Squires C.H."/>
            <person name="Defelice M."/>
            <person name="Devereux J."/>
            <person name="Calvo J.M."/>
        </authorList>
    </citation>
    <scope>NUCLEOTIDE SEQUENCE [GENOMIC DNA]</scope>
</reference>
<reference key="2">
    <citation type="journal article" date="1992" name="Nucleic Acids Res.">
        <title>Systematic sequencing of the Escherichia coli genome: analysis of the 0-2.4 min region.</title>
        <authorList>
            <person name="Yura T."/>
            <person name="Mori H."/>
            <person name="Nagai H."/>
            <person name="Nagata T."/>
            <person name="Ishihama A."/>
            <person name="Fujita N."/>
            <person name="Isono K."/>
            <person name="Mizobuchi K."/>
            <person name="Nakata A."/>
        </authorList>
    </citation>
    <scope>NUCLEOTIDE SEQUENCE [LARGE SCALE GENOMIC DNA]</scope>
    <source>
        <strain>K12</strain>
    </source>
</reference>
<reference key="3">
    <citation type="journal article" date="1997" name="Science">
        <title>The complete genome sequence of Escherichia coli K-12.</title>
        <authorList>
            <person name="Blattner F.R."/>
            <person name="Plunkett G. III"/>
            <person name="Bloch C.A."/>
            <person name="Perna N.T."/>
            <person name="Burland V."/>
            <person name="Riley M."/>
            <person name="Collado-Vides J."/>
            <person name="Glasner J.D."/>
            <person name="Rode C.K."/>
            <person name="Mayhew G.F."/>
            <person name="Gregor J."/>
            <person name="Davis N.W."/>
            <person name="Kirkpatrick H.A."/>
            <person name="Goeden M.A."/>
            <person name="Rose D.J."/>
            <person name="Mau B."/>
            <person name="Shao Y."/>
        </authorList>
    </citation>
    <scope>NUCLEOTIDE SEQUENCE [LARGE SCALE GENOMIC DNA]</scope>
    <source>
        <strain>K12 / MG1655 / ATCC 47076</strain>
    </source>
</reference>
<reference key="4">
    <citation type="journal article" date="2006" name="Mol. Syst. Biol.">
        <title>Highly accurate genome sequences of Escherichia coli K-12 strains MG1655 and W3110.</title>
        <authorList>
            <person name="Hayashi K."/>
            <person name="Morooka N."/>
            <person name="Yamamoto Y."/>
            <person name="Fujita K."/>
            <person name="Isono K."/>
            <person name="Choi S."/>
            <person name="Ohtsubo E."/>
            <person name="Baba T."/>
            <person name="Wanner B.L."/>
            <person name="Mori H."/>
            <person name="Horiuchi T."/>
        </authorList>
    </citation>
    <scope>NUCLEOTIDE SEQUENCE [LARGE SCALE GENOMIC DNA]</scope>
    <scope>SEQUENCE REVISION</scope>
    <source>
        <strain>K12 / W3110 / ATCC 27325 / DSM 5911</strain>
    </source>
</reference>
<reference key="5">
    <citation type="submission" date="1991-01" db="EMBL/GenBank/DDBJ databases">
        <title>Regulation of transcription at the 2-minute region of the genetic map of Escherichia coli.</title>
        <authorList>
            <person name="Ayala J.A."/>
        </authorList>
    </citation>
    <scope>NUCLEOTIDE SEQUENCE [GENOMIC DNA]</scope>
</reference>
<reference key="6">
    <citation type="journal article" date="1985" name="J. Bacteriol.">
        <title>Unusual organization of the ilvIH promoter of Escherichia coli.</title>
        <authorList>
            <person name="Haughn G.W."/>
            <person name="Squires C.H."/>
            <person name="Defelice M."/>
            <person name="Largo C.T."/>
            <person name="Calvo J.M."/>
        </authorList>
    </citation>
    <scope>NUCLEOTIDE SEQUENCE [GENOMIC DNA] OF 1-8</scope>
</reference>
<reference key="7">
    <citation type="journal article" date="1997" name="Electrophoresis">
        <title>Comparing the predicted and observed properties of proteins encoded in the genome of Escherichia coli K-12.</title>
        <authorList>
            <person name="Link A.J."/>
            <person name="Robison K."/>
            <person name="Church G.M."/>
        </authorList>
    </citation>
    <scope>PROTEIN SEQUENCE OF 1-12</scope>
    <source>
        <strain>K12 / EMG2</strain>
    </source>
</reference>
<accession>P00893</accession>
<accession>P78045</accession>